<name>RPOB_CITK8</name>
<sequence>MVYSYTEKKRIRKDFGKRPQVLDVPYLLSIQLDSFQKFIEQDPEGQYGLEAAFRSVFPIQSYSGNSELQYVSYRLGEPVFDVQECQIRGVTYSAPLRVKLRLVIYEREAPEGTVKDIKEQEVYMGEIPLMTDNGTFVINGTERVIVSQLHRSPGVFFDSDKGKTHSSGKVLYNARIIPYRGSWLDFEFDPKDNLFVRIDRRRKLPATIILRALQYTTEQILDLFFEKVIFEIRDNKLQMELVPERLRGETASFDIEANGKVYVEKGRRITARHIRQLEKDDIKHIEVPVEYIAGKVASKDYVDESTGELICAANMELSLDLLAKLSQSGHKRIETLFTNDLDHGPYISETVRIDPTNDRLSALVEIYRMMRPGEPPTREAAESLFENLFFSEDRYDLSAVGRMKFNRSLLRDEIEGSGILSKDDIIDVMKKLIDIRNGKGEVDDIDHLGNRRIRSVGEMAENQFRVGLVRVERAVKERLSLGDLDTLMPQDMINAKPISAAVKEFFGSSQLSQFMDQNNPLSEITHKRRISALGPGGLTRERAGFEVRDVHPTHYGRVCPIETPEGPNIGLINSLSVYAQTNEYGFLETPYRKVTDGVVTDEIHYLSAIEEGNYVIAQANSNLDDEGHFVEDLVTCRSKGESSLFSRDQVDYMDVSTQQVVSVGASLIPFLEHDDANRALMGANMQRQAVPTLRADKPLVGTGMERAVAVDSGVTAVAKRGGTVQYVDASRIVIKVNEDEMYPGEAGIDIYNLTKYTRSNQNTCINQMPCVSLGEPVERGDVLADGPSTDLGELALGQNMRVAFMPWNGYNFEDSILVSERVVQEDRFTTIHIQELACVSRDTKLGPEEITADIPNVGEAALSKLDESGIVYIGAEVTGGDILVGKVTPKGETQLTPEEKLLRAIFGEKASDVKDSSLRVPNGVSGTVIDVQVFTRDGVEKDKRALEIEEMQLKQAKKDLSEELQILEAGLFSRIHAVLVSGGVEAEKLDKLPRDRWLELGLTDEEKQNQLEQLAEQYDELKHEFEKKLEAKRRKITQGDDLAPGVLKIVKVYLAVKRRIQPGDKMAGRHGNKGVISKINPIEDMPYDENGTPVDIVLNPLGVPSRMNIGQILETHLGMAAKGIGDKINAMLKQQQEVAKLREFIQRAYDLGADVRQKVDLNTFSDEEVLRLAENLRKGMPIATPVFDGAKEAEIKELLKLGDLPTSGQITLFDGRTGEQFERSVTVGYMYMLKLNHLVDDKMHARSTGSYSLVTQQPLGGKAQFGGQRFGEMEVWALEAYGAAYTLQEMLTVKSDDVNGRTKMYKNIVDGNHQMEPGMPESFNVLLKEIRSLGINIELEDE</sequence>
<proteinExistence type="inferred from homology"/>
<protein>
    <recommendedName>
        <fullName evidence="1">DNA-directed RNA polymerase subunit beta</fullName>
        <shortName evidence="1">RNAP subunit beta</shortName>
        <ecNumber evidence="1">2.7.7.6</ecNumber>
    </recommendedName>
    <alternativeName>
        <fullName evidence="1">RNA polymerase subunit beta</fullName>
    </alternativeName>
    <alternativeName>
        <fullName evidence="1">Transcriptase subunit beta</fullName>
    </alternativeName>
</protein>
<reference key="1">
    <citation type="submission" date="2007-08" db="EMBL/GenBank/DDBJ databases">
        <authorList>
            <consortium name="The Citrobacter koseri Genome Sequencing Project"/>
            <person name="McClelland M."/>
            <person name="Sanderson E.K."/>
            <person name="Porwollik S."/>
            <person name="Spieth J."/>
            <person name="Clifton W.S."/>
            <person name="Latreille P."/>
            <person name="Courtney L."/>
            <person name="Wang C."/>
            <person name="Pepin K."/>
            <person name="Bhonagiri V."/>
            <person name="Nash W."/>
            <person name="Johnson M."/>
            <person name="Thiruvilangam P."/>
            <person name="Wilson R."/>
        </authorList>
    </citation>
    <scope>NUCLEOTIDE SEQUENCE [LARGE SCALE GENOMIC DNA]</scope>
    <source>
        <strain>ATCC BAA-895 / CDC 4225-83 / SGSC4696</strain>
    </source>
</reference>
<gene>
    <name evidence="1" type="primary">rpoB</name>
    <name type="ordered locus">CKO_03002</name>
</gene>
<keyword id="KW-0240">DNA-directed RNA polymerase</keyword>
<keyword id="KW-0548">Nucleotidyltransferase</keyword>
<keyword id="KW-1185">Reference proteome</keyword>
<keyword id="KW-0804">Transcription</keyword>
<keyword id="KW-0808">Transferase</keyword>
<evidence type="ECO:0000255" key="1">
    <source>
        <dbReference type="HAMAP-Rule" id="MF_01321"/>
    </source>
</evidence>
<evidence type="ECO:0000305" key="2"/>
<dbReference type="EC" id="2.7.7.6" evidence="1"/>
<dbReference type="EMBL" id="CP000822">
    <property type="protein sequence ID" value="ABV14102.1"/>
    <property type="status" value="ALT_INIT"/>
    <property type="molecule type" value="Genomic_DNA"/>
</dbReference>
<dbReference type="RefSeq" id="WP_024130652.1">
    <property type="nucleotide sequence ID" value="NC_009792.1"/>
</dbReference>
<dbReference type="SMR" id="A8AKT9"/>
<dbReference type="STRING" id="290338.CKO_03002"/>
<dbReference type="GeneID" id="45136815"/>
<dbReference type="KEGG" id="cko:CKO_03002"/>
<dbReference type="HOGENOM" id="CLU_000524_4_0_6"/>
<dbReference type="OrthoDB" id="9803954at2"/>
<dbReference type="Proteomes" id="UP000008148">
    <property type="component" value="Chromosome"/>
</dbReference>
<dbReference type="GO" id="GO:0000428">
    <property type="term" value="C:DNA-directed RNA polymerase complex"/>
    <property type="evidence" value="ECO:0007669"/>
    <property type="project" value="UniProtKB-KW"/>
</dbReference>
<dbReference type="GO" id="GO:0003677">
    <property type="term" value="F:DNA binding"/>
    <property type="evidence" value="ECO:0007669"/>
    <property type="project" value="UniProtKB-UniRule"/>
</dbReference>
<dbReference type="GO" id="GO:0003899">
    <property type="term" value="F:DNA-directed RNA polymerase activity"/>
    <property type="evidence" value="ECO:0007669"/>
    <property type="project" value="UniProtKB-UniRule"/>
</dbReference>
<dbReference type="GO" id="GO:0032549">
    <property type="term" value="F:ribonucleoside binding"/>
    <property type="evidence" value="ECO:0007669"/>
    <property type="project" value="InterPro"/>
</dbReference>
<dbReference type="GO" id="GO:0006351">
    <property type="term" value="P:DNA-templated transcription"/>
    <property type="evidence" value="ECO:0007669"/>
    <property type="project" value="UniProtKB-UniRule"/>
</dbReference>
<dbReference type="CDD" id="cd00653">
    <property type="entry name" value="RNA_pol_B_RPB2"/>
    <property type="match status" value="1"/>
</dbReference>
<dbReference type="FunFam" id="2.30.150.10:FF:000001">
    <property type="entry name" value="DNA-directed RNA polymerase subunit beta"/>
    <property type="match status" value="1"/>
</dbReference>
<dbReference type="FunFam" id="2.40.270.10:FF:000003">
    <property type="entry name" value="DNA-directed RNA polymerase subunit beta"/>
    <property type="match status" value="1"/>
</dbReference>
<dbReference type="FunFam" id="2.40.270.10:FF:000004">
    <property type="entry name" value="DNA-directed RNA polymerase subunit beta"/>
    <property type="match status" value="1"/>
</dbReference>
<dbReference type="FunFam" id="2.40.50.100:FF:000006">
    <property type="entry name" value="DNA-directed RNA polymerase subunit beta"/>
    <property type="match status" value="1"/>
</dbReference>
<dbReference type="FunFam" id="2.40.50.150:FF:000001">
    <property type="entry name" value="DNA-directed RNA polymerase subunit beta"/>
    <property type="match status" value="1"/>
</dbReference>
<dbReference type="FunFam" id="3.90.1100.10:FF:000002">
    <property type="entry name" value="DNA-directed RNA polymerase subunit beta"/>
    <property type="match status" value="1"/>
</dbReference>
<dbReference type="FunFam" id="3.90.1110.10:FF:000001">
    <property type="entry name" value="DNA-directed RNA polymerase subunit beta"/>
    <property type="match status" value="1"/>
</dbReference>
<dbReference type="FunFam" id="3.90.1110.10:FF:000004">
    <property type="entry name" value="DNA-directed RNA polymerase subunit beta"/>
    <property type="match status" value="1"/>
</dbReference>
<dbReference type="FunFam" id="3.90.1800.10:FF:000001">
    <property type="entry name" value="DNA-directed RNA polymerase subunit beta"/>
    <property type="match status" value="1"/>
</dbReference>
<dbReference type="Gene3D" id="2.40.50.100">
    <property type="match status" value="1"/>
</dbReference>
<dbReference type="Gene3D" id="2.40.50.150">
    <property type="match status" value="1"/>
</dbReference>
<dbReference type="Gene3D" id="3.90.1100.10">
    <property type="match status" value="2"/>
</dbReference>
<dbReference type="Gene3D" id="6.10.140.1670">
    <property type="match status" value="1"/>
</dbReference>
<dbReference type="Gene3D" id="2.30.150.10">
    <property type="entry name" value="DNA-directed RNA polymerase, beta subunit, external 1 domain"/>
    <property type="match status" value="1"/>
</dbReference>
<dbReference type="Gene3D" id="2.40.270.10">
    <property type="entry name" value="DNA-directed RNA polymerase, subunit 2, domain 6"/>
    <property type="match status" value="1"/>
</dbReference>
<dbReference type="Gene3D" id="3.90.1800.10">
    <property type="entry name" value="RNA polymerase alpha subunit dimerisation domain"/>
    <property type="match status" value="1"/>
</dbReference>
<dbReference type="Gene3D" id="3.90.1110.10">
    <property type="entry name" value="RNA polymerase Rpb2, domain 2"/>
    <property type="match status" value="1"/>
</dbReference>
<dbReference type="HAMAP" id="MF_01321">
    <property type="entry name" value="RNApol_bact_RpoB"/>
    <property type="match status" value="1"/>
</dbReference>
<dbReference type="InterPro" id="IPR042107">
    <property type="entry name" value="DNA-dir_RNA_pol_bsu_ext_1_sf"/>
</dbReference>
<dbReference type="InterPro" id="IPR019462">
    <property type="entry name" value="DNA-dir_RNA_pol_bsu_external_1"/>
</dbReference>
<dbReference type="InterPro" id="IPR015712">
    <property type="entry name" value="DNA-dir_RNA_pol_su2"/>
</dbReference>
<dbReference type="InterPro" id="IPR007120">
    <property type="entry name" value="DNA-dir_RNAP_su2_dom"/>
</dbReference>
<dbReference type="InterPro" id="IPR037033">
    <property type="entry name" value="DNA-dir_RNAP_su2_hyb_sf"/>
</dbReference>
<dbReference type="InterPro" id="IPR010243">
    <property type="entry name" value="RNA_pol_bsu_bac"/>
</dbReference>
<dbReference type="InterPro" id="IPR007121">
    <property type="entry name" value="RNA_pol_bsu_CS"/>
</dbReference>
<dbReference type="InterPro" id="IPR007644">
    <property type="entry name" value="RNA_pol_bsu_protrusion"/>
</dbReference>
<dbReference type="InterPro" id="IPR007642">
    <property type="entry name" value="RNA_pol_Rpb2_2"/>
</dbReference>
<dbReference type="InterPro" id="IPR037034">
    <property type="entry name" value="RNA_pol_Rpb2_2_sf"/>
</dbReference>
<dbReference type="InterPro" id="IPR007645">
    <property type="entry name" value="RNA_pol_Rpb2_3"/>
</dbReference>
<dbReference type="InterPro" id="IPR007641">
    <property type="entry name" value="RNA_pol_Rpb2_7"/>
</dbReference>
<dbReference type="InterPro" id="IPR014724">
    <property type="entry name" value="RNA_pol_RPB2_OB-fold"/>
</dbReference>
<dbReference type="NCBIfam" id="NF001616">
    <property type="entry name" value="PRK00405.1"/>
    <property type="match status" value="1"/>
</dbReference>
<dbReference type="NCBIfam" id="TIGR02013">
    <property type="entry name" value="rpoB"/>
    <property type="match status" value="1"/>
</dbReference>
<dbReference type="PANTHER" id="PTHR20856">
    <property type="entry name" value="DNA-DIRECTED RNA POLYMERASE I SUBUNIT 2"/>
    <property type="match status" value="1"/>
</dbReference>
<dbReference type="Pfam" id="PF04563">
    <property type="entry name" value="RNA_pol_Rpb2_1"/>
    <property type="match status" value="1"/>
</dbReference>
<dbReference type="Pfam" id="PF04561">
    <property type="entry name" value="RNA_pol_Rpb2_2"/>
    <property type="match status" value="2"/>
</dbReference>
<dbReference type="Pfam" id="PF04565">
    <property type="entry name" value="RNA_pol_Rpb2_3"/>
    <property type="match status" value="1"/>
</dbReference>
<dbReference type="Pfam" id="PF10385">
    <property type="entry name" value="RNA_pol_Rpb2_45"/>
    <property type="match status" value="1"/>
</dbReference>
<dbReference type="Pfam" id="PF00562">
    <property type="entry name" value="RNA_pol_Rpb2_6"/>
    <property type="match status" value="1"/>
</dbReference>
<dbReference type="Pfam" id="PF04560">
    <property type="entry name" value="RNA_pol_Rpb2_7"/>
    <property type="match status" value="1"/>
</dbReference>
<dbReference type="SUPFAM" id="SSF64484">
    <property type="entry name" value="beta and beta-prime subunits of DNA dependent RNA-polymerase"/>
    <property type="match status" value="1"/>
</dbReference>
<dbReference type="PROSITE" id="PS01166">
    <property type="entry name" value="RNA_POL_BETA"/>
    <property type="match status" value="1"/>
</dbReference>
<feature type="chain" id="PRO_0000329169" description="DNA-directed RNA polymerase subunit beta">
    <location>
        <begin position="1"/>
        <end position="1342"/>
    </location>
</feature>
<organism>
    <name type="scientific">Citrobacter koseri (strain ATCC BAA-895 / CDC 4225-83 / SGSC4696)</name>
    <dbReference type="NCBI Taxonomy" id="290338"/>
    <lineage>
        <taxon>Bacteria</taxon>
        <taxon>Pseudomonadati</taxon>
        <taxon>Pseudomonadota</taxon>
        <taxon>Gammaproteobacteria</taxon>
        <taxon>Enterobacterales</taxon>
        <taxon>Enterobacteriaceae</taxon>
        <taxon>Citrobacter</taxon>
    </lineage>
</organism>
<accession>A8AKT9</accession>
<comment type="function">
    <text evidence="1">DNA-dependent RNA polymerase catalyzes the transcription of DNA into RNA using the four ribonucleoside triphosphates as substrates.</text>
</comment>
<comment type="catalytic activity">
    <reaction evidence="1">
        <text>RNA(n) + a ribonucleoside 5'-triphosphate = RNA(n+1) + diphosphate</text>
        <dbReference type="Rhea" id="RHEA:21248"/>
        <dbReference type="Rhea" id="RHEA-COMP:14527"/>
        <dbReference type="Rhea" id="RHEA-COMP:17342"/>
        <dbReference type="ChEBI" id="CHEBI:33019"/>
        <dbReference type="ChEBI" id="CHEBI:61557"/>
        <dbReference type="ChEBI" id="CHEBI:140395"/>
        <dbReference type="EC" id="2.7.7.6"/>
    </reaction>
</comment>
<comment type="subunit">
    <text evidence="1">The RNAP catalytic core consists of 2 alpha, 1 beta, 1 beta' and 1 omega subunit. When a sigma factor is associated with the core the holoenzyme is formed, which can initiate transcription.</text>
</comment>
<comment type="similarity">
    <text evidence="1">Belongs to the RNA polymerase beta chain family.</text>
</comment>
<comment type="sequence caution" evidence="2">
    <conflict type="erroneous initiation">
        <sequence resource="EMBL-CDS" id="ABV14102"/>
    </conflict>
</comment>